<proteinExistence type="inferred from homology"/>
<sequence length="341" mass="38053">MTKPIILTGDRPTGKLHIGHYVGSLKNRVLLQNEGSYTLFVFLADQQALTDHAKDPQTIVESIGNVALDYLAVGLDPNKSTLFIQSQIPELAELSMYYMNLVSLARLERNPTVKTEIAQKGFGESIPAGFLVYPVAQAADITAFKANLVPVGTDQKPMIEQTREIVRSFNHAYNCQVLVEPEGIYPENDAAGRLPGLDGNAKMSKSLNNGIFLADDMDTVKKKVMSMYTDPNHIKVEEPGQIEGNMVFHYLDVFGRDEDQKEITAMKEHYQKGGLGDVKTKRYLLDILERELSPIRERRLEYAKDMGQVYQMLQKGSEKAQAVAASTLDEVKSAMGLNYFK</sequence>
<feature type="chain" id="PRO_0000136683" description="Tryptophan--tRNA ligase">
    <location>
        <begin position="1"/>
        <end position="341"/>
    </location>
</feature>
<feature type="short sequence motif" description="'HIGH' region" evidence="1">
    <location>
        <begin position="12"/>
        <end position="20"/>
    </location>
</feature>
<feature type="short sequence motif" description="'KMSKS' region" evidence="1">
    <location>
        <begin position="202"/>
        <end position="206"/>
    </location>
</feature>
<feature type="binding site" evidence="1">
    <location>
        <begin position="11"/>
        <end position="13"/>
    </location>
    <ligand>
        <name>ATP</name>
        <dbReference type="ChEBI" id="CHEBI:30616"/>
    </ligand>
</feature>
<feature type="binding site" evidence="1">
    <location>
        <begin position="19"/>
        <end position="20"/>
    </location>
    <ligand>
        <name>ATP</name>
        <dbReference type="ChEBI" id="CHEBI:30616"/>
    </ligand>
</feature>
<feature type="binding site" evidence="1">
    <location>
        <position position="140"/>
    </location>
    <ligand>
        <name>L-tryptophan</name>
        <dbReference type="ChEBI" id="CHEBI:57912"/>
    </ligand>
</feature>
<feature type="binding site" evidence="1">
    <location>
        <begin position="152"/>
        <end position="154"/>
    </location>
    <ligand>
        <name>ATP</name>
        <dbReference type="ChEBI" id="CHEBI:30616"/>
    </ligand>
</feature>
<feature type="binding site" evidence="1">
    <location>
        <position position="194"/>
    </location>
    <ligand>
        <name>ATP</name>
        <dbReference type="ChEBI" id="CHEBI:30616"/>
    </ligand>
</feature>
<feature type="binding site" evidence="1">
    <location>
        <begin position="202"/>
        <end position="206"/>
    </location>
    <ligand>
        <name>ATP</name>
        <dbReference type="ChEBI" id="CHEBI:30616"/>
    </ligand>
</feature>
<reference key="1">
    <citation type="journal article" date="2002" name="Mol. Microbiol.">
        <title>Genome sequence of Streptococcus agalactiae, a pathogen causing invasive neonatal disease.</title>
        <authorList>
            <person name="Glaser P."/>
            <person name="Rusniok C."/>
            <person name="Buchrieser C."/>
            <person name="Chevalier F."/>
            <person name="Frangeul L."/>
            <person name="Msadek T."/>
            <person name="Zouine M."/>
            <person name="Couve E."/>
            <person name="Lalioui L."/>
            <person name="Poyart C."/>
            <person name="Trieu-Cuot P."/>
            <person name="Kunst F."/>
        </authorList>
    </citation>
    <scope>NUCLEOTIDE SEQUENCE [LARGE SCALE GENOMIC DNA]</scope>
    <source>
        <strain>NEM316</strain>
    </source>
</reference>
<comment type="function">
    <text evidence="1">Catalyzes the attachment of tryptophan to tRNA(Trp).</text>
</comment>
<comment type="catalytic activity">
    <reaction evidence="1">
        <text>tRNA(Trp) + L-tryptophan + ATP = L-tryptophyl-tRNA(Trp) + AMP + diphosphate + H(+)</text>
        <dbReference type="Rhea" id="RHEA:24080"/>
        <dbReference type="Rhea" id="RHEA-COMP:9671"/>
        <dbReference type="Rhea" id="RHEA-COMP:9705"/>
        <dbReference type="ChEBI" id="CHEBI:15378"/>
        <dbReference type="ChEBI" id="CHEBI:30616"/>
        <dbReference type="ChEBI" id="CHEBI:33019"/>
        <dbReference type="ChEBI" id="CHEBI:57912"/>
        <dbReference type="ChEBI" id="CHEBI:78442"/>
        <dbReference type="ChEBI" id="CHEBI:78535"/>
        <dbReference type="ChEBI" id="CHEBI:456215"/>
        <dbReference type="EC" id="6.1.1.2"/>
    </reaction>
</comment>
<comment type="subunit">
    <text evidence="1">Homodimer.</text>
</comment>
<comment type="subcellular location">
    <subcellularLocation>
        <location evidence="1">Cytoplasm</location>
    </subcellularLocation>
</comment>
<comment type="similarity">
    <text evidence="1">Belongs to the class-I aminoacyl-tRNA synthetase family.</text>
</comment>
<keyword id="KW-0030">Aminoacyl-tRNA synthetase</keyword>
<keyword id="KW-0067">ATP-binding</keyword>
<keyword id="KW-0963">Cytoplasm</keyword>
<keyword id="KW-0436">Ligase</keyword>
<keyword id="KW-0547">Nucleotide-binding</keyword>
<keyword id="KW-0648">Protein biosynthesis</keyword>
<gene>
    <name evidence="1" type="primary">trpS</name>
    <name type="ordered locus">gbs2127</name>
</gene>
<organism>
    <name type="scientific">Streptococcus agalactiae serotype III (strain NEM316)</name>
    <dbReference type="NCBI Taxonomy" id="211110"/>
    <lineage>
        <taxon>Bacteria</taxon>
        <taxon>Bacillati</taxon>
        <taxon>Bacillota</taxon>
        <taxon>Bacilli</taxon>
        <taxon>Lactobacillales</taxon>
        <taxon>Streptococcaceae</taxon>
        <taxon>Streptococcus</taxon>
    </lineage>
</organism>
<protein>
    <recommendedName>
        <fullName evidence="1">Tryptophan--tRNA ligase</fullName>
        <ecNumber evidence="1">6.1.1.2</ecNumber>
    </recommendedName>
    <alternativeName>
        <fullName evidence="1">Tryptophanyl-tRNA synthetase</fullName>
        <shortName evidence="1">TrpRS</shortName>
    </alternativeName>
</protein>
<accession>Q8E2J5</accession>
<name>SYW_STRA3</name>
<evidence type="ECO:0000255" key="1">
    <source>
        <dbReference type="HAMAP-Rule" id="MF_00140"/>
    </source>
</evidence>
<dbReference type="EC" id="6.1.1.2" evidence="1"/>
<dbReference type="EMBL" id="AL766856">
    <property type="protein sequence ID" value="CAD47786.1"/>
    <property type="molecule type" value="Genomic_DNA"/>
</dbReference>
<dbReference type="RefSeq" id="WP_000165475.1">
    <property type="nucleotide sequence ID" value="NC_004368.1"/>
</dbReference>
<dbReference type="SMR" id="Q8E2J5"/>
<dbReference type="GeneID" id="66886903"/>
<dbReference type="KEGG" id="san:trpS"/>
<dbReference type="eggNOG" id="COG0180">
    <property type="taxonomic scope" value="Bacteria"/>
</dbReference>
<dbReference type="HOGENOM" id="CLU_029244_0_1_9"/>
<dbReference type="Proteomes" id="UP000000823">
    <property type="component" value="Chromosome"/>
</dbReference>
<dbReference type="GO" id="GO:0005829">
    <property type="term" value="C:cytosol"/>
    <property type="evidence" value="ECO:0007669"/>
    <property type="project" value="TreeGrafter"/>
</dbReference>
<dbReference type="GO" id="GO:0005524">
    <property type="term" value="F:ATP binding"/>
    <property type="evidence" value="ECO:0007669"/>
    <property type="project" value="UniProtKB-UniRule"/>
</dbReference>
<dbReference type="GO" id="GO:0004830">
    <property type="term" value="F:tryptophan-tRNA ligase activity"/>
    <property type="evidence" value="ECO:0007669"/>
    <property type="project" value="UniProtKB-UniRule"/>
</dbReference>
<dbReference type="GO" id="GO:0006436">
    <property type="term" value="P:tryptophanyl-tRNA aminoacylation"/>
    <property type="evidence" value="ECO:0007669"/>
    <property type="project" value="UniProtKB-UniRule"/>
</dbReference>
<dbReference type="CDD" id="cd00806">
    <property type="entry name" value="TrpRS_core"/>
    <property type="match status" value="1"/>
</dbReference>
<dbReference type="FunFam" id="1.10.240.10:FF:000005">
    <property type="entry name" value="Tryptophan--tRNA ligase"/>
    <property type="match status" value="1"/>
</dbReference>
<dbReference type="FunFam" id="3.40.50.620:FF:000094">
    <property type="entry name" value="Tryptophan--tRNA ligase"/>
    <property type="match status" value="1"/>
</dbReference>
<dbReference type="Gene3D" id="3.40.50.620">
    <property type="entry name" value="HUPs"/>
    <property type="match status" value="1"/>
</dbReference>
<dbReference type="Gene3D" id="1.10.240.10">
    <property type="entry name" value="Tyrosyl-Transfer RNA Synthetase"/>
    <property type="match status" value="1"/>
</dbReference>
<dbReference type="HAMAP" id="MF_00140_B">
    <property type="entry name" value="Trp_tRNA_synth_B"/>
    <property type="match status" value="1"/>
</dbReference>
<dbReference type="InterPro" id="IPR001412">
    <property type="entry name" value="aa-tRNA-synth_I_CS"/>
</dbReference>
<dbReference type="InterPro" id="IPR002305">
    <property type="entry name" value="aa-tRNA-synth_Ic"/>
</dbReference>
<dbReference type="InterPro" id="IPR014729">
    <property type="entry name" value="Rossmann-like_a/b/a_fold"/>
</dbReference>
<dbReference type="InterPro" id="IPR002306">
    <property type="entry name" value="Trp-tRNA-ligase"/>
</dbReference>
<dbReference type="InterPro" id="IPR024109">
    <property type="entry name" value="Trp-tRNA-ligase_bac-type"/>
</dbReference>
<dbReference type="InterPro" id="IPR050203">
    <property type="entry name" value="Trp-tRNA_synthetase"/>
</dbReference>
<dbReference type="NCBIfam" id="TIGR00233">
    <property type="entry name" value="trpS"/>
    <property type="match status" value="1"/>
</dbReference>
<dbReference type="PANTHER" id="PTHR43766">
    <property type="entry name" value="TRYPTOPHAN--TRNA LIGASE, MITOCHONDRIAL"/>
    <property type="match status" value="1"/>
</dbReference>
<dbReference type="PANTHER" id="PTHR43766:SF1">
    <property type="entry name" value="TRYPTOPHAN--TRNA LIGASE, MITOCHONDRIAL"/>
    <property type="match status" value="1"/>
</dbReference>
<dbReference type="Pfam" id="PF00579">
    <property type="entry name" value="tRNA-synt_1b"/>
    <property type="match status" value="1"/>
</dbReference>
<dbReference type="PRINTS" id="PR01039">
    <property type="entry name" value="TRNASYNTHTRP"/>
</dbReference>
<dbReference type="SUPFAM" id="SSF52374">
    <property type="entry name" value="Nucleotidylyl transferase"/>
    <property type="match status" value="1"/>
</dbReference>
<dbReference type="PROSITE" id="PS00178">
    <property type="entry name" value="AA_TRNA_LIGASE_I"/>
    <property type="match status" value="1"/>
</dbReference>